<keyword id="KW-0963">Cytoplasm</keyword>
<keyword id="KW-0448">Lipopolysaccharide biosynthesis</keyword>
<keyword id="KW-1185">Reference proteome</keyword>
<keyword id="KW-0808">Transferase</keyword>
<comment type="function">
    <text evidence="1">Involved in the transfer of galactofuranose (Galf) onto an alpha-D-gluco-configured acceptor substrate to form a beta-1,6-linkage. It uses n-octyl alpha-D-glucopyranoside as an acceptor substrate for the addition of galactofuranose from the donor substrate UDP-galactofuranose. It is not able to use beta-D-glucopyranoside isomers.</text>
</comment>
<comment type="pathway">
    <text>Bacterial outer membrane biogenesis; lipopolysaccharide biosynthesis.</text>
</comment>
<comment type="subcellular location">
    <subcellularLocation>
        <location evidence="2">Cytoplasm</location>
    </subcellularLocation>
</comment>
<dbReference type="EC" id="2.4.1.-"/>
<dbReference type="EMBL" id="U03041">
    <property type="protein sequence ID" value="AAC31634.1"/>
    <property type="molecule type" value="Genomic_DNA"/>
</dbReference>
<dbReference type="EMBL" id="U09876">
    <property type="protein sequence ID" value="AAB88405.1"/>
    <property type="molecule type" value="Genomic_DNA"/>
</dbReference>
<dbReference type="EMBL" id="U00096">
    <property type="protein sequence ID" value="AAC75095.1"/>
    <property type="molecule type" value="Genomic_DNA"/>
</dbReference>
<dbReference type="EMBL" id="AP009048">
    <property type="protein sequence ID" value="BAA15876.1"/>
    <property type="molecule type" value="Genomic_DNA"/>
</dbReference>
<dbReference type="PIR" id="I69645">
    <property type="entry name" value="I69645"/>
</dbReference>
<dbReference type="RefSeq" id="NP_416538.1">
    <property type="nucleotide sequence ID" value="NC_000913.3"/>
</dbReference>
<dbReference type="RefSeq" id="WP_001407542.1">
    <property type="nucleotide sequence ID" value="NZ_LN832404.1"/>
</dbReference>
<dbReference type="SMR" id="P37749"/>
<dbReference type="BioGRID" id="4261355">
    <property type="interactions" value="265"/>
</dbReference>
<dbReference type="FunCoup" id="P37749">
    <property type="interactions" value="18"/>
</dbReference>
<dbReference type="IntAct" id="P37749">
    <property type="interactions" value="2"/>
</dbReference>
<dbReference type="STRING" id="511145.b2034"/>
<dbReference type="jPOST" id="P37749"/>
<dbReference type="PaxDb" id="511145-b2034"/>
<dbReference type="EnsemblBacteria" id="AAC75095">
    <property type="protein sequence ID" value="AAC75095"/>
    <property type="gene ID" value="b2034"/>
</dbReference>
<dbReference type="GeneID" id="947041"/>
<dbReference type="KEGG" id="ecj:JW2019"/>
<dbReference type="KEGG" id="eco:b2034"/>
<dbReference type="KEGG" id="ecoc:C3026_11460"/>
<dbReference type="PATRIC" id="fig|1411691.4.peg.217"/>
<dbReference type="EchoBASE" id="EB1926"/>
<dbReference type="eggNOG" id="COG0438">
    <property type="taxonomic scope" value="Bacteria"/>
</dbReference>
<dbReference type="HOGENOM" id="CLU_057651_1_0_6"/>
<dbReference type="InParanoid" id="P37749"/>
<dbReference type="OMA" id="FQKSPWL"/>
<dbReference type="OrthoDB" id="9790931at2"/>
<dbReference type="PhylomeDB" id="P37749"/>
<dbReference type="BioCyc" id="EcoCyc:EG11983-MONOMER"/>
<dbReference type="BioCyc" id="MetaCyc:EG11983-MONOMER"/>
<dbReference type="UniPathway" id="UPA00030"/>
<dbReference type="PRO" id="PR:P37749"/>
<dbReference type="Proteomes" id="UP000000625">
    <property type="component" value="Chromosome"/>
</dbReference>
<dbReference type="GO" id="GO:0005737">
    <property type="term" value="C:cytoplasm"/>
    <property type="evidence" value="ECO:0007669"/>
    <property type="project" value="UniProtKB-SubCell"/>
</dbReference>
<dbReference type="GO" id="GO:0008921">
    <property type="term" value="F:lipopolysaccharide-1,6-galactosyltransferase activity"/>
    <property type="evidence" value="ECO:0000314"/>
    <property type="project" value="EcoCyc"/>
</dbReference>
<dbReference type="GO" id="GO:0009103">
    <property type="term" value="P:lipopolysaccharide biosynthetic process"/>
    <property type="evidence" value="ECO:0007669"/>
    <property type="project" value="UniProtKB-UniPathway"/>
</dbReference>
<dbReference type="Gene3D" id="3.40.50.2000">
    <property type="entry name" value="Glycogen Phosphorylase B"/>
    <property type="match status" value="2"/>
</dbReference>
<dbReference type="NCBIfam" id="NF007324">
    <property type="entry name" value="PRK09814.1-3"/>
    <property type="match status" value="1"/>
</dbReference>
<dbReference type="PIRSF" id="PIRSF007023">
    <property type="entry name" value="UDP-Galf_transf"/>
    <property type="match status" value="1"/>
</dbReference>
<evidence type="ECO:0000269" key="1">
    <source>
    </source>
</evidence>
<evidence type="ECO:0000305" key="2"/>
<protein>
    <recommendedName>
        <fullName>Beta-1,6-galactofuranosyltransferase WbbI</fullName>
        <ecNumber>2.4.1.-</ecNumber>
    </recommendedName>
    <alternativeName>
        <fullName>D-Galf:alpha-D-Glc beta-1,6-galactofuranosyltransferase</fullName>
    </alternativeName>
    <alternativeName>
        <fullName>GalF transferase</fullName>
    </alternativeName>
</protein>
<sequence>MYFLNDLNFSRRDAGFKARKDALDIASDYENISVVNIPLWGGVVQRIISSVKLSTFLCGLENKDVLIFNFPMAKPFWHILSFFHRLLKFRIVPLIHDIDELRGGGGSDSVRLATCDMVISHNPQMTKYLSKYMSQDKIKDIKIFDYLVSSDVEHRDVTDKQRGVIYAGNLSRHKCSFIYTEGCDFTLFGVNYENKDNPKYLGSFDAQSPEKINLPGMQFGLIWDGDSVETCSGAFGDYLKFNNPHKTSLYLSMELPVFIWDKAALADFIVDNRIGYAVGSIKEMQEIVDSMTIETYKQISENTKIISQKIRTGSYFRDVLEEVIDDLKTR</sequence>
<gene>
    <name type="primary">wbbI</name>
    <name type="synonym">yefG</name>
    <name type="ordered locus">b2034</name>
    <name type="ordered locus">JW2019</name>
</gene>
<name>WBBI_ECOLI</name>
<reference key="1">
    <citation type="journal article" date="1994" name="J. Bacteriol.">
        <title>Genetic analysis of the O-specific lipopolysaccharide biosynthesis region (rfb) of Escherichia coli K-12 W3110: identification of genes that confer group 6 specificity to Shigella flexneri serotypes Y and 4a.</title>
        <authorList>
            <person name="Yao Z."/>
            <person name="Valvano M.A."/>
        </authorList>
    </citation>
    <scope>NUCLEOTIDE SEQUENCE [GENOMIC DNA]</scope>
    <source>
        <strain>K12 / W3110 / ATCC 27325 / DSM 5911</strain>
    </source>
</reference>
<reference key="2">
    <citation type="journal article" date="1994" name="J. Bacteriol.">
        <title>Structure of the O antigen of Escherichia coli K-12 and the sequence of its rfb gene cluster.</title>
        <authorList>
            <person name="Stevenson G."/>
            <person name="Neal B."/>
            <person name="Liu D."/>
            <person name="Hobbs M."/>
            <person name="Packer N.H."/>
            <person name="Batley M."/>
            <person name="Redmond J.W."/>
            <person name="Lindquist L."/>
            <person name="Reeves P.R."/>
        </authorList>
    </citation>
    <scope>NUCLEOTIDE SEQUENCE [GENOMIC DNA]</scope>
    <source>
        <strain>K12 / WG1</strain>
    </source>
</reference>
<reference key="3">
    <citation type="journal article" date="1996" name="DNA Res.">
        <title>A 460-kb DNA sequence of the Escherichia coli K-12 genome corresponding to the 40.1-50.0 min region on the linkage map.</title>
        <authorList>
            <person name="Itoh T."/>
            <person name="Aiba H."/>
            <person name="Baba T."/>
            <person name="Fujita K."/>
            <person name="Hayashi K."/>
            <person name="Inada T."/>
            <person name="Isono K."/>
            <person name="Kasai H."/>
            <person name="Kimura S."/>
            <person name="Kitakawa M."/>
            <person name="Kitagawa M."/>
            <person name="Makino K."/>
            <person name="Miki T."/>
            <person name="Mizobuchi K."/>
            <person name="Mori H."/>
            <person name="Mori T."/>
            <person name="Motomura K."/>
            <person name="Nakade S."/>
            <person name="Nakamura Y."/>
            <person name="Nashimoto H."/>
            <person name="Nishio Y."/>
            <person name="Oshima T."/>
            <person name="Saito N."/>
            <person name="Sampei G."/>
            <person name="Seki Y."/>
            <person name="Sivasundaram S."/>
            <person name="Tagami H."/>
            <person name="Takeda J."/>
            <person name="Takemoto K."/>
            <person name="Wada C."/>
            <person name="Yamamoto Y."/>
            <person name="Horiuchi T."/>
        </authorList>
    </citation>
    <scope>NUCLEOTIDE SEQUENCE [LARGE SCALE GENOMIC DNA]</scope>
    <source>
        <strain>K12 / W3110 / ATCC 27325 / DSM 5911</strain>
    </source>
</reference>
<reference key="4">
    <citation type="journal article" date="1997" name="Science">
        <title>The complete genome sequence of Escherichia coli K-12.</title>
        <authorList>
            <person name="Blattner F.R."/>
            <person name="Plunkett G. III"/>
            <person name="Bloch C.A."/>
            <person name="Perna N.T."/>
            <person name="Burland V."/>
            <person name="Riley M."/>
            <person name="Collado-Vides J."/>
            <person name="Glasner J.D."/>
            <person name="Rode C.K."/>
            <person name="Mayhew G.F."/>
            <person name="Gregor J."/>
            <person name="Davis N.W."/>
            <person name="Kirkpatrick H.A."/>
            <person name="Goeden M.A."/>
            <person name="Rose D.J."/>
            <person name="Mau B."/>
            <person name="Shao Y."/>
        </authorList>
    </citation>
    <scope>NUCLEOTIDE SEQUENCE [LARGE SCALE GENOMIC DNA]</scope>
    <source>
        <strain>K12 / MG1655 / ATCC 47076</strain>
    </source>
</reference>
<reference key="5">
    <citation type="journal article" date="2006" name="Mol. Syst. Biol.">
        <title>Highly accurate genome sequences of Escherichia coli K-12 strains MG1655 and W3110.</title>
        <authorList>
            <person name="Hayashi K."/>
            <person name="Morooka N."/>
            <person name="Yamamoto Y."/>
            <person name="Fujita K."/>
            <person name="Isono K."/>
            <person name="Choi S."/>
            <person name="Ohtsubo E."/>
            <person name="Baba T."/>
            <person name="Wanner B.L."/>
            <person name="Mori H."/>
            <person name="Horiuchi T."/>
        </authorList>
    </citation>
    <scope>NUCLEOTIDE SEQUENCE [LARGE SCALE GENOMIC DNA]</scope>
    <source>
        <strain>K12 / W3110 / ATCC 27325 / DSM 5911</strain>
    </source>
</reference>
<reference key="6">
    <citation type="journal article" date="2006" name="Org. Biomol. Chem.">
        <title>Expression and initial characterization of WbbI, a putative D-Galf:alpha-D-Glc beta-1,6-galactofuranosyltransferase from Escherichia coli K-12.</title>
        <authorList>
            <person name="Wing C."/>
            <person name="Errey J.C."/>
            <person name="Mukhopadhyay B."/>
            <person name="Blanchard J.S."/>
            <person name="Field R.A."/>
        </authorList>
    </citation>
    <scope>FUNCTION AS A GALACTOFURANOSYLTRANSFERASE</scope>
    <scope>SUBSTRATE SPECIFICITY</scope>
</reference>
<accession>P37749</accession>
<organism>
    <name type="scientific">Escherichia coli (strain K12)</name>
    <dbReference type="NCBI Taxonomy" id="83333"/>
    <lineage>
        <taxon>Bacteria</taxon>
        <taxon>Pseudomonadati</taxon>
        <taxon>Pseudomonadota</taxon>
        <taxon>Gammaproteobacteria</taxon>
        <taxon>Enterobacterales</taxon>
        <taxon>Enterobacteriaceae</taxon>
        <taxon>Escherichia</taxon>
    </lineage>
</organism>
<feature type="chain" id="PRO_0000169120" description="Beta-1,6-galactofuranosyltransferase WbbI">
    <location>
        <begin position="1"/>
        <end position="330"/>
    </location>
</feature>
<proteinExistence type="evidence at protein level"/>